<accession>B8GMB4</accession>
<comment type="function">
    <text evidence="1">Part of a membrane-bound complex that couples electron transfer with translocation of ions across the membrane.</text>
</comment>
<comment type="subunit">
    <text evidence="1">The complex is composed of six subunits: RnfA, RnfB, RnfC, RnfD, RnfE and RnfG.</text>
</comment>
<comment type="subcellular location">
    <subcellularLocation>
        <location evidence="1">Cell inner membrane</location>
        <topology evidence="1">Multi-pass membrane protein</topology>
    </subcellularLocation>
</comment>
<comment type="similarity">
    <text evidence="1">Belongs to the NqrDE/RnfAE family.</text>
</comment>
<evidence type="ECO:0000255" key="1">
    <source>
        <dbReference type="HAMAP-Rule" id="MF_00459"/>
    </source>
</evidence>
<gene>
    <name evidence="1" type="primary">rnfA</name>
    <name type="ordered locus">Tgr7_2626</name>
</gene>
<reference key="1">
    <citation type="journal article" date="2011" name="Stand. Genomic Sci.">
        <title>Complete genome sequence of 'Thioalkalivibrio sulfidophilus' HL-EbGr7.</title>
        <authorList>
            <person name="Muyzer G."/>
            <person name="Sorokin D.Y."/>
            <person name="Mavromatis K."/>
            <person name="Lapidus A."/>
            <person name="Clum A."/>
            <person name="Ivanova N."/>
            <person name="Pati A."/>
            <person name="d'Haeseleer P."/>
            <person name="Woyke T."/>
            <person name="Kyrpides N.C."/>
        </authorList>
    </citation>
    <scope>NUCLEOTIDE SEQUENCE [LARGE SCALE GENOMIC DNA]</scope>
    <source>
        <strain>HL-EbGR7</strain>
    </source>
</reference>
<name>RNFA_THISH</name>
<keyword id="KW-0997">Cell inner membrane</keyword>
<keyword id="KW-1003">Cell membrane</keyword>
<keyword id="KW-0249">Electron transport</keyword>
<keyword id="KW-0472">Membrane</keyword>
<keyword id="KW-1185">Reference proteome</keyword>
<keyword id="KW-1278">Translocase</keyword>
<keyword id="KW-0812">Transmembrane</keyword>
<keyword id="KW-1133">Transmembrane helix</keyword>
<keyword id="KW-0813">Transport</keyword>
<proteinExistence type="inferred from homology"/>
<protein>
    <recommendedName>
        <fullName evidence="1">Ion-translocating oxidoreductase complex subunit A</fullName>
        <ecNumber evidence="1">7.-.-.-</ecNumber>
    </recommendedName>
    <alternativeName>
        <fullName evidence="1">Rnf electron transport complex subunit A</fullName>
    </alternativeName>
</protein>
<feature type="chain" id="PRO_1000191742" description="Ion-translocating oxidoreductase complex subunit A">
    <location>
        <begin position="1"/>
        <end position="192"/>
    </location>
</feature>
<feature type="transmembrane region" description="Helical" evidence="1">
    <location>
        <begin position="5"/>
        <end position="25"/>
    </location>
</feature>
<feature type="transmembrane region" description="Helical" evidence="1">
    <location>
        <begin position="39"/>
        <end position="59"/>
    </location>
</feature>
<feature type="transmembrane region" description="Helical" evidence="1">
    <location>
        <begin position="65"/>
        <end position="85"/>
    </location>
</feature>
<feature type="transmembrane region" description="Helical" evidence="1">
    <location>
        <begin position="102"/>
        <end position="122"/>
    </location>
</feature>
<feature type="transmembrane region" description="Helical" evidence="1">
    <location>
        <begin position="134"/>
        <end position="154"/>
    </location>
</feature>
<feature type="transmembrane region" description="Helical" evidence="1">
    <location>
        <begin position="171"/>
        <end position="191"/>
    </location>
</feature>
<organism>
    <name type="scientific">Thioalkalivibrio sulfidiphilus (strain HL-EbGR7)</name>
    <dbReference type="NCBI Taxonomy" id="396588"/>
    <lineage>
        <taxon>Bacteria</taxon>
        <taxon>Pseudomonadati</taxon>
        <taxon>Pseudomonadota</taxon>
        <taxon>Gammaproteobacteria</taxon>
        <taxon>Chromatiales</taxon>
        <taxon>Ectothiorhodospiraceae</taxon>
        <taxon>Thioalkalivibrio</taxon>
    </lineage>
</organism>
<dbReference type="EC" id="7.-.-.-" evidence="1"/>
<dbReference type="EMBL" id="CP001339">
    <property type="protein sequence ID" value="ACL73701.1"/>
    <property type="molecule type" value="Genomic_DNA"/>
</dbReference>
<dbReference type="RefSeq" id="WP_012639176.1">
    <property type="nucleotide sequence ID" value="NC_011901.1"/>
</dbReference>
<dbReference type="SMR" id="B8GMB4"/>
<dbReference type="STRING" id="396588.Tgr7_2626"/>
<dbReference type="KEGG" id="tgr:Tgr7_2626"/>
<dbReference type="eggNOG" id="COG4657">
    <property type="taxonomic scope" value="Bacteria"/>
</dbReference>
<dbReference type="HOGENOM" id="CLU_095255_1_0_6"/>
<dbReference type="OrthoDB" id="9803631at2"/>
<dbReference type="Proteomes" id="UP000002383">
    <property type="component" value="Chromosome"/>
</dbReference>
<dbReference type="GO" id="GO:0005886">
    <property type="term" value="C:plasma membrane"/>
    <property type="evidence" value="ECO:0007669"/>
    <property type="project" value="UniProtKB-SubCell"/>
</dbReference>
<dbReference type="GO" id="GO:0022900">
    <property type="term" value="P:electron transport chain"/>
    <property type="evidence" value="ECO:0007669"/>
    <property type="project" value="UniProtKB-UniRule"/>
</dbReference>
<dbReference type="HAMAP" id="MF_00459">
    <property type="entry name" value="RsxA_RnfA"/>
    <property type="match status" value="1"/>
</dbReference>
<dbReference type="InterPro" id="IPR011293">
    <property type="entry name" value="Ion_transpt_RnfA/RsxA"/>
</dbReference>
<dbReference type="InterPro" id="IPR003667">
    <property type="entry name" value="NqrDE/RnfAE"/>
</dbReference>
<dbReference type="InterPro" id="IPR050133">
    <property type="entry name" value="NqrDE/RnfAE_oxidrdctase"/>
</dbReference>
<dbReference type="NCBIfam" id="NF003481">
    <property type="entry name" value="PRK05151.1"/>
    <property type="match status" value="1"/>
</dbReference>
<dbReference type="NCBIfam" id="TIGR01943">
    <property type="entry name" value="rnfA"/>
    <property type="match status" value="1"/>
</dbReference>
<dbReference type="PANTHER" id="PTHR30335">
    <property type="entry name" value="INTEGRAL MEMBRANE PROTEIN OF SOXR-REDUCING COMPLEX"/>
    <property type="match status" value="1"/>
</dbReference>
<dbReference type="PANTHER" id="PTHR30335:SF0">
    <property type="entry name" value="ION-TRANSLOCATING OXIDOREDUCTASE COMPLEX SUBUNIT A"/>
    <property type="match status" value="1"/>
</dbReference>
<dbReference type="Pfam" id="PF02508">
    <property type="entry name" value="Rnf-Nqr"/>
    <property type="match status" value="1"/>
</dbReference>
<dbReference type="PIRSF" id="PIRSF006102">
    <property type="entry name" value="NQR_DE"/>
    <property type="match status" value="1"/>
</dbReference>
<sequence length="192" mass="20465">MTEYALILISTVLVNNFVLVKFLGLCPFMGVSRKVETATGMGLATTFVLTLSSVCSYLVNEYLLAPLGLEYLRTIAFILVIAAVVQFTEMVVHKTSPLLYNVLGIFLPLITTNCAVLGVALLNVQEAHGFIESALYGLGAAVGFSLVLVLFASIRERVAVADVPLPFKGNAIALITAGLMSLGFMGFIGLVK</sequence>